<dbReference type="EMBL" id="Z75208">
    <property type="protein sequence ID" value="CAA99570.1"/>
    <property type="molecule type" value="Genomic_DNA"/>
</dbReference>
<dbReference type="EMBL" id="AL009126">
    <property type="protein sequence ID" value="CAB14817.1"/>
    <property type="molecule type" value="Genomic_DNA"/>
</dbReference>
<dbReference type="PIR" id="E69985">
    <property type="entry name" value="E69985"/>
</dbReference>
<dbReference type="RefSeq" id="NP_390735.1">
    <property type="nucleotide sequence ID" value="NC_000964.3"/>
</dbReference>
<dbReference type="RefSeq" id="WP_003237674.1">
    <property type="nucleotide sequence ID" value="NZ_OZ025638.1"/>
</dbReference>
<dbReference type="FunCoup" id="P94546">
    <property type="interactions" value="12"/>
</dbReference>
<dbReference type="STRING" id="224308.BSU28570"/>
<dbReference type="PaxDb" id="224308-BSU28570"/>
<dbReference type="EnsemblBacteria" id="CAB14817">
    <property type="protein sequence ID" value="CAB14817"/>
    <property type="gene ID" value="BSU_28570"/>
</dbReference>
<dbReference type="GeneID" id="937969"/>
<dbReference type="KEGG" id="bsu:BSU28570"/>
<dbReference type="PATRIC" id="fig|224308.179.peg.3104"/>
<dbReference type="eggNOG" id="COG3766">
    <property type="taxonomic scope" value="Bacteria"/>
</dbReference>
<dbReference type="InParanoid" id="P94546"/>
<dbReference type="OrthoDB" id="2352756at2"/>
<dbReference type="PhylomeDB" id="P94546"/>
<dbReference type="BioCyc" id="BSUB:BSU28570-MONOMER"/>
<dbReference type="Proteomes" id="UP000001570">
    <property type="component" value="Chromosome"/>
</dbReference>
<dbReference type="GO" id="GO:0005886">
    <property type="term" value="C:plasma membrane"/>
    <property type="evidence" value="ECO:0007669"/>
    <property type="project" value="UniProtKB-SubCell"/>
</dbReference>
<dbReference type="InterPro" id="IPR007140">
    <property type="entry name" value="DUF350"/>
</dbReference>
<dbReference type="PANTHER" id="PTHR40043">
    <property type="entry name" value="UPF0719 INNER MEMBRANE PROTEIN YJFL"/>
    <property type="match status" value="1"/>
</dbReference>
<dbReference type="PANTHER" id="PTHR40043:SF1">
    <property type="entry name" value="UPF0719 INNER MEMBRANE PROTEIN YJFL"/>
    <property type="match status" value="1"/>
</dbReference>
<dbReference type="Pfam" id="PF03994">
    <property type="entry name" value="DUF350"/>
    <property type="match status" value="1"/>
</dbReference>
<proteinExistence type="inferred from homology"/>
<evidence type="ECO:0000255" key="1"/>
<evidence type="ECO:0000305" key="2"/>
<keyword id="KW-1003">Cell membrane</keyword>
<keyword id="KW-0472">Membrane</keyword>
<keyword id="KW-1185">Reference proteome</keyword>
<keyword id="KW-0812">Transmembrane</keyword>
<keyword id="KW-1133">Transmembrane helix</keyword>
<name>YSHE_BACSU</name>
<gene>
    <name type="primary">yshE</name>
    <name type="ordered locus">BSU28570</name>
</gene>
<comment type="subcellular location">
    <subcellularLocation>
        <location evidence="2">Cell membrane</location>
        <topology evidence="2">Multi-pass membrane protein</topology>
    </subcellularLocation>
</comment>
<comment type="similarity">
    <text evidence="2">Belongs to the UPF0719 family.</text>
</comment>
<protein>
    <recommendedName>
        <fullName>UPF0719 transmembrane protein YshE</fullName>
    </recommendedName>
</protein>
<feature type="chain" id="PRO_0000360769" description="UPF0719 transmembrane protein YshE">
    <location>
        <begin position="1"/>
        <end position="134"/>
    </location>
</feature>
<feature type="transmembrane region" description="Helical" evidence="1">
    <location>
        <begin position="10"/>
        <end position="30"/>
    </location>
</feature>
<feature type="transmembrane region" description="Helical" evidence="1">
    <location>
        <begin position="48"/>
        <end position="68"/>
    </location>
</feature>
<feature type="transmembrane region" description="Helical" evidence="1">
    <location>
        <begin position="78"/>
        <end position="98"/>
    </location>
</feature>
<feature type="transmembrane region" description="Helical" evidence="1">
    <location>
        <begin position="114"/>
        <end position="134"/>
    </location>
</feature>
<reference key="1">
    <citation type="journal article" date="1996" name="Microbiology">
        <title>The dnaB-pheA (256 degrees-240 degrees) region of the Bacillus subtilis chromosome containing genes responsible for stress responses, the utilization of plant cell walls and primary metabolism.</title>
        <authorList>
            <person name="Wipat A."/>
            <person name="Carter N."/>
            <person name="Brignell C.S."/>
            <person name="Guy J.B."/>
            <person name="Piper K."/>
            <person name="Sanders J."/>
            <person name="Emmerson P.T."/>
            <person name="Harwood C.R."/>
        </authorList>
    </citation>
    <scope>NUCLEOTIDE SEQUENCE [GENOMIC DNA]</scope>
    <source>
        <strain>168</strain>
    </source>
</reference>
<reference key="2">
    <citation type="journal article" date="1997" name="Nature">
        <title>The complete genome sequence of the Gram-positive bacterium Bacillus subtilis.</title>
        <authorList>
            <person name="Kunst F."/>
            <person name="Ogasawara N."/>
            <person name="Moszer I."/>
            <person name="Albertini A.M."/>
            <person name="Alloni G."/>
            <person name="Azevedo V."/>
            <person name="Bertero M.G."/>
            <person name="Bessieres P."/>
            <person name="Bolotin A."/>
            <person name="Borchert S."/>
            <person name="Borriss R."/>
            <person name="Boursier L."/>
            <person name="Brans A."/>
            <person name="Braun M."/>
            <person name="Brignell S.C."/>
            <person name="Bron S."/>
            <person name="Brouillet S."/>
            <person name="Bruschi C.V."/>
            <person name="Caldwell B."/>
            <person name="Capuano V."/>
            <person name="Carter N.M."/>
            <person name="Choi S.-K."/>
            <person name="Codani J.-J."/>
            <person name="Connerton I.F."/>
            <person name="Cummings N.J."/>
            <person name="Daniel R.A."/>
            <person name="Denizot F."/>
            <person name="Devine K.M."/>
            <person name="Duesterhoeft A."/>
            <person name="Ehrlich S.D."/>
            <person name="Emmerson P.T."/>
            <person name="Entian K.-D."/>
            <person name="Errington J."/>
            <person name="Fabret C."/>
            <person name="Ferrari E."/>
            <person name="Foulger D."/>
            <person name="Fritz C."/>
            <person name="Fujita M."/>
            <person name="Fujita Y."/>
            <person name="Fuma S."/>
            <person name="Galizzi A."/>
            <person name="Galleron N."/>
            <person name="Ghim S.-Y."/>
            <person name="Glaser P."/>
            <person name="Goffeau A."/>
            <person name="Golightly E.J."/>
            <person name="Grandi G."/>
            <person name="Guiseppi G."/>
            <person name="Guy B.J."/>
            <person name="Haga K."/>
            <person name="Haiech J."/>
            <person name="Harwood C.R."/>
            <person name="Henaut A."/>
            <person name="Hilbert H."/>
            <person name="Holsappel S."/>
            <person name="Hosono S."/>
            <person name="Hullo M.-F."/>
            <person name="Itaya M."/>
            <person name="Jones L.-M."/>
            <person name="Joris B."/>
            <person name="Karamata D."/>
            <person name="Kasahara Y."/>
            <person name="Klaerr-Blanchard M."/>
            <person name="Klein C."/>
            <person name="Kobayashi Y."/>
            <person name="Koetter P."/>
            <person name="Koningstein G."/>
            <person name="Krogh S."/>
            <person name="Kumano M."/>
            <person name="Kurita K."/>
            <person name="Lapidus A."/>
            <person name="Lardinois S."/>
            <person name="Lauber J."/>
            <person name="Lazarevic V."/>
            <person name="Lee S.-M."/>
            <person name="Levine A."/>
            <person name="Liu H."/>
            <person name="Masuda S."/>
            <person name="Mauel C."/>
            <person name="Medigue C."/>
            <person name="Medina N."/>
            <person name="Mellado R.P."/>
            <person name="Mizuno M."/>
            <person name="Moestl D."/>
            <person name="Nakai S."/>
            <person name="Noback M."/>
            <person name="Noone D."/>
            <person name="O'Reilly M."/>
            <person name="Ogawa K."/>
            <person name="Ogiwara A."/>
            <person name="Oudega B."/>
            <person name="Park S.-H."/>
            <person name="Parro V."/>
            <person name="Pohl T.M."/>
            <person name="Portetelle D."/>
            <person name="Porwollik S."/>
            <person name="Prescott A.M."/>
            <person name="Presecan E."/>
            <person name="Pujic P."/>
            <person name="Purnelle B."/>
            <person name="Rapoport G."/>
            <person name="Rey M."/>
            <person name="Reynolds S."/>
            <person name="Rieger M."/>
            <person name="Rivolta C."/>
            <person name="Rocha E."/>
            <person name="Roche B."/>
            <person name="Rose M."/>
            <person name="Sadaie Y."/>
            <person name="Sato T."/>
            <person name="Scanlan E."/>
            <person name="Schleich S."/>
            <person name="Schroeter R."/>
            <person name="Scoffone F."/>
            <person name="Sekiguchi J."/>
            <person name="Sekowska A."/>
            <person name="Seror S.J."/>
            <person name="Serror P."/>
            <person name="Shin B.-S."/>
            <person name="Soldo B."/>
            <person name="Sorokin A."/>
            <person name="Tacconi E."/>
            <person name="Takagi T."/>
            <person name="Takahashi H."/>
            <person name="Takemaru K."/>
            <person name="Takeuchi M."/>
            <person name="Tamakoshi A."/>
            <person name="Tanaka T."/>
            <person name="Terpstra P."/>
            <person name="Tognoni A."/>
            <person name="Tosato V."/>
            <person name="Uchiyama S."/>
            <person name="Vandenbol M."/>
            <person name="Vannier F."/>
            <person name="Vassarotti A."/>
            <person name="Viari A."/>
            <person name="Wambutt R."/>
            <person name="Wedler E."/>
            <person name="Wedler H."/>
            <person name="Weitzenegger T."/>
            <person name="Winters P."/>
            <person name="Wipat A."/>
            <person name="Yamamoto H."/>
            <person name="Yamane K."/>
            <person name="Yasumoto K."/>
            <person name="Yata K."/>
            <person name="Yoshida K."/>
            <person name="Yoshikawa H.-F."/>
            <person name="Zumstein E."/>
            <person name="Yoshikawa H."/>
            <person name="Danchin A."/>
        </authorList>
    </citation>
    <scope>NUCLEOTIDE SEQUENCE [LARGE SCALE GENOMIC DNA]</scope>
    <source>
        <strain>168</strain>
    </source>
</reference>
<organism>
    <name type="scientific">Bacillus subtilis (strain 168)</name>
    <dbReference type="NCBI Taxonomy" id="224308"/>
    <lineage>
        <taxon>Bacteria</taxon>
        <taxon>Bacillati</taxon>
        <taxon>Bacillota</taxon>
        <taxon>Bacilli</taxon>
        <taxon>Bacillales</taxon>
        <taxon>Bacillaceae</taxon>
        <taxon>Bacillus</taxon>
    </lineage>
</organism>
<sequence>MSDFWENELVEIAAYYSVAVLCLVLFLTVFELVTAYKNWEEIQKGNLAVAMATGGKILGIANVFQHSISQHNSLLQMIGWGVYGFVMLLISYFIFEFLTPRFKIDQEIENDNRAVGFISFVISVGLSFVVAAGI</sequence>
<accession>P94546</accession>
<accession>Q795X5</accession>